<keyword id="KW-0648">Protein biosynthesis</keyword>
<keyword id="KW-0808">Transferase</keyword>
<evidence type="ECO:0000255" key="1">
    <source>
        <dbReference type="HAMAP-Rule" id="MF_00182"/>
    </source>
</evidence>
<proteinExistence type="inferred from homology"/>
<protein>
    <recommendedName>
        <fullName evidence="1">Methionyl-tRNA formyltransferase</fullName>
        <ecNumber evidence="1">2.1.2.9</ecNumber>
    </recommendedName>
</protein>
<accession>A1KRE6</accession>
<organism>
    <name type="scientific">Neisseria meningitidis serogroup C / serotype 2a (strain ATCC 700532 / DSM 15464 / FAM18)</name>
    <dbReference type="NCBI Taxonomy" id="272831"/>
    <lineage>
        <taxon>Bacteria</taxon>
        <taxon>Pseudomonadati</taxon>
        <taxon>Pseudomonadota</taxon>
        <taxon>Betaproteobacteria</taxon>
        <taxon>Neisseriales</taxon>
        <taxon>Neisseriaceae</taxon>
        <taxon>Neisseria</taxon>
    </lineage>
</organism>
<sequence length="308" mass="32846">MKVIFAGTPDFAAAALKAVAAAGFEIPLVLTQPDRPKGRGMQLTAPPVKQAALELGLRVAQPEKLRNNAEALQMLKEVEADVMVVAAYGLILPQEVLDTPKHGCLNIHASLLPRWRGAAPIQRAIEAGDAETGVCIMQMDIGLDTGDVVSEHRYAIQPTDTANEVHDALMEIGAAAVVADLQQLQSKGRLNAVKQPEEGVTYAQKLSKEEARIDWSESAAVIERKIRAFNPVPAAWVEYQGKPMKIRRAEVVAQQGAAGEVLSCSADGLVVACGENALKITELQPAGGRRMNIAAFAAGRHIEAGTKL</sequence>
<gene>
    <name evidence="1" type="primary">fmt</name>
    <name type="ordered locus">NMC0103</name>
</gene>
<reference key="1">
    <citation type="journal article" date="2007" name="PLoS Genet.">
        <title>Meningococcal genetic variation mechanisms viewed through comparative analysis of serogroup C strain FAM18.</title>
        <authorList>
            <person name="Bentley S.D."/>
            <person name="Vernikos G.S."/>
            <person name="Snyder L.A.S."/>
            <person name="Churcher C."/>
            <person name="Arrowsmith C."/>
            <person name="Chillingworth T."/>
            <person name="Cronin A."/>
            <person name="Davis P.H."/>
            <person name="Holroyd N.E."/>
            <person name="Jagels K."/>
            <person name="Maddison M."/>
            <person name="Moule S."/>
            <person name="Rabbinowitsch E."/>
            <person name="Sharp S."/>
            <person name="Unwin L."/>
            <person name="Whitehead S."/>
            <person name="Quail M.A."/>
            <person name="Achtman M."/>
            <person name="Barrell B.G."/>
            <person name="Saunders N.J."/>
            <person name="Parkhill J."/>
        </authorList>
    </citation>
    <scope>NUCLEOTIDE SEQUENCE [LARGE SCALE GENOMIC DNA]</scope>
    <source>
        <strain>ATCC 700532 / DSM 15464 / FAM18</strain>
    </source>
</reference>
<feature type="chain" id="PRO_1000020108" description="Methionyl-tRNA formyltransferase">
    <location>
        <begin position="1"/>
        <end position="308"/>
    </location>
</feature>
<feature type="binding site" evidence="1">
    <location>
        <begin position="110"/>
        <end position="113"/>
    </location>
    <ligand>
        <name>(6S)-5,6,7,8-tetrahydrofolate</name>
        <dbReference type="ChEBI" id="CHEBI:57453"/>
    </ligand>
</feature>
<name>FMT_NEIMF</name>
<dbReference type="EC" id="2.1.2.9" evidence="1"/>
<dbReference type="EMBL" id="AM421808">
    <property type="protein sequence ID" value="CAM09422.1"/>
    <property type="molecule type" value="Genomic_DNA"/>
</dbReference>
<dbReference type="RefSeq" id="WP_002218547.1">
    <property type="nucleotide sequence ID" value="NC_008767.1"/>
</dbReference>
<dbReference type="SMR" id="A1KRE6"/>
<dbReference type="KEGG" id="nmc:NMC0103"/>
<dbReference type="HOGENOM" id="CLU_033347_1_2_4"/>
<dbReference type="Proteomes" id="UP000002286">
    <property type="component" value="Chromosome"/>
</dbReference>
<dbReference type="GO" id="GO:0005829">
    <property type="term" value="C:cytosol"/>
    <property type="evidence" value="ECO:0007669"/>
    <property type="project" value="TreeGrafter"/>
</dbReference>
<dbReference type="GO" id="GO:0004479">
    <property type="term" value="F:methionyl-tRNA formyltransferase activity"/>
    <property type="evidence" value="ECO:0007669"/>
    <property type="project" value="UniProtKB-UniRule"/>
</dbReference>
<dbReference type="CDD" id="cd08646">
    <property type="entry name" value="FMT_core_Met-tRNA-FMT_N"/>
    <property type="match status" value="1"/>
</dbReference>
<dbReference type="CDD" id="cd08704">
    <property type="entry name" value="Met_tRNA_FMT_C"/>
    <property type="match status" value="1"/>
</dbReference>
<dbReference type="FunFam" id="3.40.50.12230:FF:000001">
    <property type="entry name" value="Methionyl-tRNA formyltransferase"/>
    <property type="match status" value="1"/>
</dbReference>
<dbReference type="Gene3D" id="3.40.50.12230">
    <property type="match status" value="1"/>
</dbReference>
<dbReference type="HAMAP" id="MF_00182">
    <property type="entry name" value="Formyl_trans"/>
    <property type="match status" value="1"/>
</dbReference>
<dbReference type="InterPro" id="IPR005794">
    <property type="entry name" value="Fmt"/>
</dbReference>
<dbReference type="InterPro" id="IPR005793">
    <property type="entry name" value="Formyl_trans_C"/>
</dbReference>
<dbReference type="InterPro" id="IPR002376">
    <property type="entry name" value="Formyl_transf_N"/>
</dbReference>
<dbReference type="InterPro" id="IPR036477">
    <property type="entry name" value="Formyl_transf_N_sf"/>
</dbReference>
<dbReference type="InterPro" id="IPR011034">
    <property type="entry name" value="Formyl_transferase-like_C_sf"/>
</dbReference>
<dbReference type="InterPro" id="IPR001555">
    <property type="entry name" value="GART_AS"/>
</dbReference>
<dbReference type="InterPro" id="IPR044135">
    <property type="entry name" value="Met-tRNA-FMT_C"/>
</dbReference>
<dbReference type="InterPro" id="IPR041711">
    <property type="entry name" value="Met-tRNA-FMT_N"/>
</dbReference>
<dbReference type="NCBIfam" id="TIGR00460">
    <property type="entry name" value="fmt"/>
    <property type="match status" value="1"/>
</dbReference>
<dbReference type="PANTHER" id="PTHR11138">
    <property type="entry name" value="METHIONYL-TRNA FORMYLTRANSFERASE"/>
    <property type="match status" value="1"/>
</dbReference>
<dbReference type="PANTHER" id="PTHR11138:SF5">
    <property type="entry name" value="METHIONYL-TRNA FORMYLTRANSFERASE, MITOCHONDRIAL"/>
    <property type="match status" value="1"/>
</dbReference>
<dbReference type="Pfam" id="PF02911">
    <property type="entry name" value="Formyl_trans_C"/>
    <property type="match status" value="1"/>
</dbReference>
<dbReference type="Pfam" id="PF00551">
    <property type="entry name" value="Formyl_trans_N"/>
    <property type="match status" value="1"/>
</dbReference>
<dbReference type="SUPFAM" id="SSF50486">
    <property type="entry name" value="FMT C-terminal domain-like"/>
    <property type="match status" value="1"/>
</dbReference>
<dbReference type="SUPFAM" id="SSF53328">
    <property type="entry name" value="Formyltransferase"/>
    <property type="match status" value="1"/>
</dbReference>
<dbReference type="PROSITE" id="PS00373">
    <property type="entry name" value="GART"/>
    <property type="match status" value="1"/>
</dbReference>
<comment type="function">
    <text evidence="1">Attaches a formyl group to the free amino group of methionyl-tRNA(fMet). The formyl group appears to play a dual role in the initiator identity of N-formylmethionyl-tRNA by promoting its recognition by IF2 and preventing the misappropriation of this tRNA by the elongation apparatus.</text>
</comment>
<comment type="catalytic activity">
    <reaction evidence="1">
        <text>L-methionyl-tRNA(fMet) + (6R)-10-formyltetrahydrofolate = N-formyl-L-methionyl-tRNA(fMet) + (6S)-5,6,7,8-tetrahydrofolate + H(+)</text>
        <dbReference type="Rhea" id="RHEA:24380"/>
        <dbReference type="Rhea" id="RHEA-COMP:9952"/>
        <dbReference type="Rhea" id="RHEA-COMP:9953"/>
        <dbReference type="ChEBI" id="CHEBI:15378"/>
        <dbReference type="ChEBI" id="CHEBI:57453"/>
        <dbReference type="ChEBI" id="CHEBI:78530"/>
        <dbReference type="ChEBI" id="CHEBI:78844"/>
        <dbReference type="ChEBI" id="CHEBI:195366"/>
        <dbReference type="EC" id="2.1.2.9"/>
    </reaction>
</comment>
<comment type="similarity">
    <text evidence="1">Belongs to the Fmt family.</text>
</comment>